<dbReference type="EC" id="1.17.7.4" evidence="1"/>
<dbReference type="EMBL" id="FM242711">
    <property type="protein sequence ID" value="CAS05223.1"/>
    <property type="molecule type" value="Genomic_DNA"/>
</dbReference>
<dbReference type="RefSeq" id="WP_003727433.1">
    <property type="nucleotide sequence ID" value="NC_012488.1"/>
</dbReference>
<dbReference type="SMR" id="C1KV98"/>
<dbReference type="KEGG" id="lmc:Lm4b_01461"/>
<dbReference type="HOGENOM" id="CLU_027486_0_0_9"/>
<dbReference type="UniPathway" id="UPA00056">
    <property type="reaction ID" value="UER00097"/>
</dbReference>
<dbReference type="UniPathway" id="UPA00059">
    <property type="reaction ID" value="UER00105"/>
</dbReference>
<dbReference type="GO" id="GO:0051539">
    <property type="term" value="F:4 iron, 4 sulfur cluster binding"/>
    <property type="evidence" value="ECO:0007669"/>
    <property type="project" value="UniProtKB-UniRule"/>
</dbReference>
<dbReference type="GO" id="GO:0051745">
    <property type="term" value="F:4-hydroxy-3-methylbut-2-enyl diphosphate reductase activity"/>
    <property type="evidence" value="ECO:0007669"/>
    <property type="project" value="UniProtKB-UniRule"/>
</dbReference>
<dbReference type="GO" id="GO:0046872">
    <property type="term" value="F:metal ion binding"/>
    <property type="evidence" value="ECO:0007669"/>
    <property type="project" value="UniProtKB-KW"/>
</dbReference>
<dbReference type="GO" id="GO:0050992">
    <property type="term" value="P:dimethylallyl diphosphate biosynthetic process"/>
    <property type="evidence" value="ECO:0007669"/>
    <property type="project" value="UniProtKB-UniRule"/>
</dbReference>
<dbReference type="GO" id="GO:0019288">
    <property type="term" value="P:isopentenyl diphosphate biosynthetic process, methylerythritol 4-phosphate pathway"/>
    <property type="evidence" value="ECO:0007669"/>
    <property type="project" value="UniProtKB-UniRule"/>
</dbReference>
<dbReference type="GO" id="GO:0016114">
    <property type="term" value="P:terpenoid biosynthetic process"/>
    <property type="evidence" value="ECO:0007669"/>
    <property type="project" value="UniProtKB-UniRule"/>
</dbReference>
<dbReference type="CDD" id="cd13944">
    <property type="entry name" value="lytB_ispH"/>
    <property type="match status" value="1"/>
</dbReference>
<dbReference type="Gene3D" id="3.40.50.11270">
    <property type="match status" value="1"/>
</dbReference>
<dbReference type="Gene3D" id="3.40.1010.20">
    <property type="entry name" value="4-hydroxy-3-methylbut-2-enyl diphosphate reductase, catalytic domain"/>
    <property type="match status" value="2"/>
</dbReference>
<dbReference type="HAMAP" id="MF_00191">
    <property type="entry name" value="IspH"/>
    <property type="match status" value="1"/>
</dbReference>
<dbReference type="InterPro" id="IPR003451">
    <property type="entry name" value="LytB/IspH"/>
</dbReference>
<dbReference type="NCBIfam" id="TIGR00216">
    <property type="entry name" value="ispH_lytB"/>
    <property type="match status" value="1"/>
</dbReference>
<dbReference type="NCBIfam" id="NF002187">
    <property type="entry name" value="PRK01045.1-1"/>
    <property type="match status" value="1"/>
</dbReference>
<dbReference type="PANTHER" id="PTHR30426">
    <property type="entry name" value="4-HYDROXY-3-METHYLBUT-2-ENYL DIPHOSPHATE REDUCTASE"/>
    <property type="match status" value="1"/>
</dbReference>
<dbReference type="PANTHER" id="PTHR30426:SF0">
    <property type="entry name" value="4-HYDROXY-3-METHYLBUT-2-ENYL DIPHOSPHATE REDUCTASE"/>
    <property type="match status" value="1"/>
</dbReference>
<dbReference type="Pfam" id="PF02401">
    <property type="entry name" value="LYTB"/>
    <property type="match status" value="1"/>
</dbReference>
<proteinExistence type="inferred from homology"/>
<sequence>MEIIKISPRGYCYGVIDAMVIAKNASLDPNLPRPIHILGMIVHNKHVTDAFESIGIYTVDGANREEILDKITTGTVIFTAHGVSPSVKAKAAAKGLTTIDATCPDVLHTYNLILEKQAAGYEIIYIGKKGHPEPEGAYGTAPDVVHLVETKADIDALSLLSDNIFVTNQTTMSKWDVADLMDYIKEKFPKAIQHQEICMATQVRQEAVAVQAKGADLTIVVGDPRSNNTARLAQVSIEKAGTKAYRIADITELDIEWIKDAKKVAVTAGASTPTQLVREVLLFLEQFDAADKTTWKRAHNKDFERILPKMKNKYMAEKRRQRLAHLKNGGS</sequence>
<gene>
    <name evidence="1" type="primary">ispH</name>
    <name type="ordered locus">Lm4b_01461</name>
</gene>
<protein>
    <recommendedName>
        <fullName evidence="1">4-hydroxy-3-methylbut-2-enyl diphosphate reductase</fullName>
        <shortName evidence="1">HMBPP reductase</shortName>
        <ecNumber evidence="1">1.17.7.4</ecNumber>
    </recommendedName>
</protein>
<reference key="1">
    <citation type="journal article" date="2012" name="BMC Genomics">
        <title>Comparative genomics and transcriptomics of lineages I, II, and III strains of Listeria monocytogenes.</title>
        <authorList>
            <person name="Hain T."/>
            <person name="Ghai R."/>
            <person name="Billion A."/>
            <person name="Kuenne C.T."/>
            <person name="Steinweg C."/>
            <person name="Izar B."/>
            <person name="Mohamed W."/>
            <person name="Mraheil M."/>
            <person name="Domann E."/>
            <person name="Schaffrath S."/>
            <person name="Karst U."/>
            <person name="Goesmann A."/>
            <person name="Oehm S."/>
            <person name="Puhler A."/>
            <person name="Merkl R."/>
            <person name="Vorwerk S."/>
            <person name="Glaser P."/>
            <person name="Garrido P."/>
            <person name="Rusniok C."/>
            <person name="Buchrieser C."/>
            <person name="Goebel W."/>
            <person name="Chakraborty T."/>
        </authorList>
    </citation>
    <scope>NUCLEOTIDE SEQUENCE [LARGE SCALE GENOMIC DNA]</scope>
    <source>
        <strain>CLIP80459</strain>
    </source>
</reference>
<name>ISPH_LISMC</name>
<organism>
    <name type="scientific">Listeria monocytogenes serotype 4b (strain CLIP80459)</name>
    <dbReference type="NCBI Taxonomy" id="568819"/>
    <lineage>
        <taxon>Bacteria</taxon>
        <taxon>Bacillati</taxon>
        <taxon>Bacillota</taxon>
        <taxon>Bacilli</taxon>
        <taxon>Bacillales</taxon>
        <taxon>Listeriaceae</taxon>
        <taxon>Listeria</taxon>
    </lineage>
</organism>
<keyword id="KW-0004">4Fe-4S</keyword>
<keyword id="KW-0408">Iron</keyword>
<keyword id="KW-0411">Iron-sulfur</keyword>
<keyword id="KW-0414">Isoprene biosynthesis</keyword>
<keyword id="KW-0479">Metal-binding</keyword>
<keyword id="KW-0560">Oxidoreductase</keyword>
<feature type="chain" id="PRO_1000204008" description="4-hydroxy-3-methylbut-2-enyl diphosphate reductase">
    <location>
        <begin position="1"/>
        <end position="331"/>
    </location>
</feature>
<feature type="active site" description="Proton donor" evidence="1">
    <location>
        <position position="133"/>
    </location>
</feature>
<feature type="binding site" evidence="1">
    <location>
        <position position="12"/>
    </location>
    <ligand>
        <name>[4Fe-4S] cluster</name>
        <dbReference type="ChEBI" id="CHEBI:49883"/>
    </ligand>
</feature>
<feature type="binding site" evidence="1">
    <location>
        <position position="43"/>
    </location>
    <ligand>
        <name>(2E)-4-hydroxy-3-methylbut-2-enyl diphosphate</name>
        <dbReference type="ChEBI" id="CHEBI:128753"/>
    </ligand>
</feature>
<feature type="binding site" evidence="1">
    <location>
        <position position="43"/>
    </location>
    <ligand>
        <name>dimethylallyl diphosphate</name>
        <dbReference type="ChEBI" id="CHEBI:57623"/>
    </ligand>
</feature>
<feature type="binding site" evidence="1">
    <location>
        <position position="43"/>
    </location>
    <ligand>
        <name>isopentenyl diphosphate</name>
        <dbReference type="ChEBI" id="CHEBI:128769"/>
    </ligand>
</feature>
<feature type="binding site" evidence="1">
    <location>
        <position position="81"/>
    </location>
    <ligand>
        <name>(2E)-4-hydroxy-3-methylbut-2-enyl diphosphate</name>
        <dbReference type="ChEBI" id="CHEBI:128753"/>
    </ligand>
</feature>
<feature type="binding site" evidence="1">
    <location>
        <position position="81"/>
    </location>
    <ligand>
        <name>dimethylallyl diphosphate</name>
        <dbReference type="ChEBI" id="CHEBI:57623"/>
    </ligand>
</feature>
<feature type="binding site" evidence="1">
    <location>
        <position position="81"/>
    </location>
    <ligand>
        <name>isopentenyl diphosphate</name>
        <dbReference type="ChEBI" id="CHEBI:128769"/>
    </ligand>
</feature>
<feature type="binding site" evidence="1">
    <location>
        <position position="103"/>
    </location>
    <ligand>
        <name>[4Fe-4S] cluster</name>
        <dbReference type="ChEBI" id="CHEBI:49883"/>
    </ligand>
</feature>
<feature type="binding site" evidence="1">
    <location>
        <position position="131"/>
    </location>
    <ligand>
        <name>(2E)-4-hydroxy-3-methylbut-2-enyl diphosphate</name>
        <dbReference type="ChEBI" id="CHEBI:128753"/>
    </ligand>
</feature>
<feature type="binding site" evidence="1">
    <location>
        <position position="131"/>
    </location>
    <ligand>
        <name>dimethylallyl diphosphate</name>
        <dbReference type="ChEBI" id="CHEBI:57623"/>
    </ligand>
</feature>
<feature type="binding site" evidence="1">
    <location>
        <position position="131"/>
    </location>
    <ligand>
        <name>isopentenyl diphosphate</name>
        <dbReference type="ChEBI" id="CHEBI:128769"/>
    </ligand>
</feature>
<feature type="binding site" evidence="1">
    <location>
        <position position="170"/>
    </location>
    <ligand>
        <name>(2E)-4-hydroxy-3-methylbut-2-enyl diphosphate</name>
        <dbReference type="ChEBI" id="CHEBI:128753"/>
    </ligand>
</feature>
<feature type="binding site" evidence="1">
    <location>
        <position position="198"/>
    </location>
    <ligand>
        <name>[4Fe-4S] cluster</name>
        <dbReference type="ChEBI" id="CHEBI:49883"/>
    </ligand>
</feature>
<feature type="binding site" evidence="1">
    <location>
        <position position="226"/>
    </location>
    <ligand>
        <name>(2E)-4-hydroxy-3-methylbut-2-enyl diphosphate</name>
        <dbReference type="ChEBI" id="CHEBI:128753"/>
    </ligand>
</feature>
<feature type="binding site" evidence="1">
    <location>
        <position position="226"/>
    </location>
    <ligand>
        <name>dimethylallyl diphosphate</name>
        <dbReference type="ChEBI" id="CHEBI:57623"/>
    </ligand>
</feature>
<feature type="binding site" evidence="1">
    <location>
        <position position="226"/>
    </location>
    <ligand>
        <name>isopentenyl diphosphate</name>
        <dbReference type="ChEBI" id="CHEBI:128769"/>
    </ligand>
</feature>
<feature type="binding site" evidence="1">
    <location>
        <position position="228"/>
    </location>
    <ligand>
        <name>(2E)-4-hydroxy-3-methylbut-2-enyl diphosphate</name>
        <dbReference type="ChEBI" id="CHEBI:128753"/>
    </ligand>
</feature>
<feature type="binding site" evidence="1">
    <location>
        <position position="228"/>
    </location>
    <ligand>
        <name>dimethylallyl diphosphate</name>
        <dbReference type="ChEBI" id="CHEBI:57623"/>
    </ligand>
</feature>
<feature type="binding site" evidence="1">
    <location>
        <position position="228"/>
    </location>
    <ligand>
        <name>isopentenyl diphosphate</name>
        <dbReference type="ChEBI" id="CHEBI:128769"/>
    </ligand>
</feature>
<feature type="binding site" evidence="1">
    <location>
        <position position="271"/>
    </location>
    <ligand>
        <name>(2E)-4-hydroxy-3-methylbut-2-enyl diphosphate</name>
        <dbReference type="ChEBI" id="CHEBI:128753"/>
    </ligand>
</feature>
<feature type="binding site" evidence="1">
    <location>
        <position position="271"/>
    </location>
    <ligand>
        <name>dimethylallyl diphosphate</name>
        <dbReference type="ChEBI" id="CHEBI:57623"/>
    </ligand>
</feature>
<feature type="binding site" evidence="1">
    <location>
        <position position="271"/>
    </location>
    <ligand>
        <name>isopentenyl diphosphate</name>
        <dbReference type="ChEBI" id="CHEBI:128769"/>
    </ligand>
</feature>
<comment type="function">
    <text evidence="1">Catalyzes the conversion of 1-hydroxy-2-methyl-2-(E)-butenyl 4-diphosphate (HMBPP) into a mixture of isopentenyl diphosphate (IPP) and dimethylallyl diphosphate (DMAPP). Acts in the terminal step of the DOXP/MEP pathway for isoprenoid precursor biosynthesis.</text>
</comment>
<comment type="catalytic activity">
    <reaction evidence="1">
        <text>isopentenyl diphosphate + 2 oxidized [2Fe-2S]-[ferredoxin] + H2O = (2E)-4-hydroxy-3-methylbut-2-enyl diphosphate + 2 reduced [2Fe-2S]-[ferredoxin] + 2 H(+)</text>
        <dbReference type="Rhea" id="RHEA:24488"/>
        <dbReference type="Rhea" id="RHEA-COMP:10000"/>
        <dbReference type="Rhea" id="RHEA-COMP:10001"/>
        <dbReference type="ChEBI" id="CHEBI:15377"/>
        <dbReference type="ChEBI" id="CHEBI:15378"/>
        <dbReference type="ChEBI" id="CHEBI:33737"/>
        <dbReference type="ChEBI" id="CHEBI:33738"/>
        <dbReference type="ChEBI" id="CHEBI:128753"/>
        <dbReference type="ChEBI" id="CHEBI:128769"/>
        <dbReference type="EC" id="1.17.7.4"/>
    </reaction>
</comment>
<comment type="catalytic activity">
    <reaction evidence="1">
        <text>dimethylallyl diphosphate + 2 oxidized [2Fe-2S]-[ferredoxin] + H2O = (2E)-4-hydroxy-3-methylbut-2-enyl diphosphate + 2 reduced [2Fe-2S]-[ferredoxin] + 2 H(+)</text>
        <dbReference type="Rhea" id="RHEA:24825"/>
        <dbReference type="Rhea" id="RHEA-COMP:10000"/>
        <dbReference type="Rhea" id="RHEA-COMP:10001"/>
        <dbReference type="ChEBI" id="CHEBI:15377"/>
        <dbReference type="ChEBI" id="CHEBI:15378"/>
        <dbReference type="ChEBI" id="CHEBI:33737"/>
        <dbReference type="ChEBI" id="CHEBI:33738"/>
        <dbReference type="ChEBI" id="CHEBI:57623"/>
        <dbReference type="ChEBI" id="CHEBI:128753"/>
        <dbReference type="EC" id="1.17.7.4"/>
    </reaction>
</comment>
<comment type="cofactor">
    <cofactor evidence="1">
        <name>[4Fe-4S] cluster</name>
        <dbReference type="ChEBI" id="CHEBI:49883"/>
    </cofactor>
    <text evidence="1">Binds 1 [4Fe-4S] cluster per subunit.</text>
</comment>
<comment type="pathway">
    <text evidence="1">Isoprenoid biosynthesis; dimethylallyl diphosphate biosynthesis; dimethylallyl diphosphate from (2E)-4-hydroxy-3-methylbutenyl diphosphate: step 1/1.</text>
</comment>
<comment type="pathway">
    <text evidence="1">Isoprenoid biosynthesis; isopentenyl diphosphate biosynthesis via DXP pathway; isopentenyl diphosphate from 1-deoxy-D-xylulose 5-phosphate: step 6/6.</text>
</comment>
<comment type="similarity">
    <text evidence="1">Belongs to the IspH family.</text>
</comment>
<evidence type="ECO:0000255" key="1">
    <source>
        <dbReference type="HAMAP-Rule" id="MF_00191"/>
    </source>
</evidence>
<accession>C1KV98</accession>